<gene>
    <name evidence="1" type="primary">flhC</name>
</gene>
<dbReference type="EMBL" id="AF077334">
    <property type="protein sequence ID" value="AAC27634.1"/>
    <property type="molecule type" value="Genomic_DNA"/>
</dbReference>
<dbReference type="SMR" id="O85807"/>
<dbReference type="STRING" id="273526.SMDB11_2237"/>
<dbReference type="GO" id="GO:0005737">
    <property type="term" value="C:cytoplasm"/>
    <property type="evidence" value="ECO:0007669"/>
    <property type="project" value="UniProtKB-SubCell"/>
</dbReference>
<dbReference type="GO" id="GO:0003677">
    <property type="term" value="F:DNA binding"/>
    <property type="evidence" value="ECO:0007669"/>
    <property type="project" value="UniProtKB-UniRule"/>
</dbReference>
<dbReference type="GO" id="GO:0008270">
    <property type="term" value="F:zinc ion binding"/>
    <property type="evidence" value="ECO:0007669"/>
    <property type="project" value="UniProtKB-UniRule"/>
</dbReference>
<dbReference type="GO" id="GO:0044781">
    <property type="term" value="P:bacterial-type flagellum organization"/>
    <property type="evidence" value="ECO:0007669"/>
    <property type="project" value="UniProtKB-KW"/>
</dbReference>
<dbReference type="GO" id="GO:0045893">
    <property type="term" value="P:positive regulation of DNA-templated transcription"/>
    <property type="evidence" value="ECO:0007669"/>
    <property type="project" value="InterPro"/>
</dbReference>
<dbReference type="GO" id="GO:1902208">
    <property type="term" value="P:regulation of bacterial-type flagellum assembly"/>
    <property type="evidence" value="ECO:0007669"/>
    <property type="project" value="UniProtKB-UniRule"/>
</dbReference>
<dbReference type="HAMAP" id="MF_01891">
    <property type="entry name" value="FhlC"/>
    <property type="match status" value="1"/>
</dbReference>
<dbReference type="InterPro" id="IPR007944">
    <property type="entry name" value="FlhC"/>
</dbReference>
<dbReference type="NCBIfam" id="NF009365">
    <property type="entry name" value="PRK12722.1"/>
    <property type="match status" value="1"/>
</dbReference>
<dbReference type="Pfam" id="PF05280">
    <property type="entry name" value="FlhC"/>
    <property type="match status" value="1"/>
</dbReference>
<dbReference type="PIRSF" id="PIRSF003159">
    <property type="entry name" value="FlhC"/>
    <property type="match status" value="1"/>
</dbReference>
<dbReference type="SUPFAM" id="SSF160930">
    <property type="entry name" value="FlhC-like"/>
    <property type="match status" value="1"/>
</dbReference>
<organism>
    <name type="scientific">Serratia marcescens</name>
    <dbReference type="NCBI Taxonomy" id="615"/>
    <lineage>
        <taxon>Bacteria</taxon>
        <taxon>Pseudomonadati</taxon>
        <taxon>Pseudomonadota</taxon>
        <taxon>Gammaproteobacteria</taxon>
        <taxon>Enterobacterales</taxon>
        <taxon>Yersiniaceae</taxon>
        <taxon>Serratia</taxon>
    </lineage>
</organism>
<proteinExistence type="inferred from homology"/>
<reference key="1">
    <citation type="journal article" date="2000" name="J. Biomed. Sci.">
        <title>Role of flhDC in the expression of the nuclease gene nucA, cell division and flagellar synthesis in Serratia marcescens.</title>
        <authorList>
            <person name="Lai H.C."/>
            <person name="Luh K.T."/>
            <person name="Ho S.W."/>
            <person name="Swift S."/>
        </authorList>
    </citation>
    <scope>NUCLEOTIDE SEQUENCE [GENOMIC DNA]</scope>
    <source>
        <strain>CH1</strain>
    </source>
</reference>
<keyword id="KW-0010">Activator</keyword>
<keyword id="KW-1005">Bacterial flagellum biogenesis</keyword>
<keyword id="KW-0963">Cytoplasm</keyword>
<keyword id="KW-0238">DNA-binding</keyword>
<keyword id="KW-0479">Metal-binding</keyword>
<keyword id="KW-0804">Transcription</keyword>
<keyword id="KW-0805">Transcription regulation</keyword>
<keyword id="KW-0862">Zinc</keyword>
<protein>
    <recommendedName>
        <fullName evidence="1">Flagellar transcriptional regulator FlhC</fullName>
    </recommendedName>
</protein>
<feature type="chain" id="PRO_0000064344" description="Flagellar transcriptional regulator FlhC">
    <location>
        <begin position="1"/>
        <end position="194"/>
    </location>
</feature>
<feature type="binding site" evidence="1">
    <location>
        <position position="139"/>
    </location>
    <ligand>
        <name>Zn(2+)</name>
        <dbReference type="ChEBI" id="CHEBI:29105"/>
    </ligand>
</feature>
<feature type="binding site" evidence="1">
    <location>
        <position position="142"/>
    </location>
    <ligand>
        <name>Zn(2+)</name>
        <dbReference type="ChEBI" id="CHEBI:29105"/>
    </ligand>
</feature>
<feature type="binding site" evidence="1">
    <location>
        <position position="159"/>
    </location>
    <ligand>
        <name>Zn(2+)</name>
        <dbReference type="ChEBI" id="CHEBI:29105"/>
    </ligand>
</feature>
<feature type="binding site" evidence="1">
    <location>
        <position position="162"/>
    </location>
    <ligand>
        <name>Zn(2+)</name>
        <dbReference type="ChEBI" id="CHEBI:29105"/>
    </ligand>
</feature>
<comment type="function">
    <text evidence="1">Functions in complex with FlhD as a master transcriptional regulator that regulates transcription of several flagellar and non-flagellar operons by binding to their promoter region. Activates expression of class 2 flagellar genes, including fliA, which is a flagellum-specific sigma factor that turns on the class 3 genes. Also regulates genes whose products function in a variety of physiological pathways.</text>
</comment>
<comment type="cofactor">
    <cofactor evidence="1">
        <name>Zn(2+)</name>
        <dbReference type="ChEBI" id="CHEBI:29105"/>
    </cofactor>
    <text evidence="1">Binds 1 zinc ion per subunit.</text>
</comment>
<comment type="subunit">
    <text evidence="1">Heterohexamer composed of two FlhC and four FlhD subunits. Each FlhC binds a FlhD dimer, forming a heterotrimer, and a hexamer assembles by dimerization of two heterotrimers.</text>
</comment>
<comment type="subcellular location">
    <subcellularLocation>
        <location evidence="1">Cytoplasm</location>
    </subcellularLocation>
</comment>
<comment type="similarity">
    <text evidence="1">Belongs to the FlhC family.</text>
</comment>
<sequence length="194" mass="21810">MMVEKSIVQEAKDIQLAMELISLGARLQMLESETQLSRGRLIKLYKELRGSPPPKGMLPFSTDWFMTWEQNIHSSMFYNAYLFLMKSGQCSGVEAVIKAYRLYLEQCPQQAGEAPLLALTRAWTLVRFVDSGMLQLSACSCCGGAFITHAHQPLNGFICSLCQPPSRAVKRRKLSPQLADIIPQLLDEQVKRAI</sequence>
<accession>O85807</accession>
<evidence type="ECO:0000255" key="1">
    <source>
        <dbReference type="HAMAP-Rule" id="MF_01891"/>
    </source>
</evidence>
<name>FLHC_SERMA</name>